<comment type="subunit">
    <text evidence="1">Part of the 50S ribosomal subunit.</text>
</comment>
<comment type="similarity">
    <text evidence="1">Belongs to the universal ribosomal protein uL30 family.</text>
</comment>
<sequence>MAKTIVIKQIGSPIRRPEKQRQTLIGLGLNKMHKTRELEDTPAVRGMINKIPHMVQIIEEKG</sequence>
<dbReference type="EMBL" id="CP000830">
    <property type="protein sequence ID" value="ABV92052.1"/>
    <property type="molecule type" value="Genomic_DNA"/>
</dbReference>
<dbReference type="RefSeq" id="WP_012176982.1">
    <property type="nucleotide sequence ID" value="NC_009952.1"/>
</dbReference>
<dbReference type="SMR" id="A8LM75"/>
<dbReference type="STRING" id="398580.Dshi_0303"/>
<dbReference type="KEGG" id="dsh:Dshi_0303"/>
<dbReference type="eggNOG" id="COG1841">
    <property type="taxonomic scope" value="Bacteria"/>
</dbReference>
<dbReference type="HOGENOM" id="CLU_131047_1_2_5"/>
<dbReference type="OrthoDB" id="9812790at2"/>
<dbReference type="Proteomes" id="UP000006833">
    <property type="component" value="Chromosome"/>
</dbReference>
<dbReference type="GO" id="GO:0022625">
    <property type="term" value="C:cytosolic large ribosomal subunit"/>
    <property type="evidence" value="ECO:0007669"/>
    <property type="project" value="TreeGrafter"/>
</dbReference>
<dbReference type="GO" id="GO:0003735">
    <property type="term" value="F:structural constituent of ribosome"/>
    <property type="evidence" value="ECO:0007669"/>
    <property type="project" value="InterPro"/>
</dbReference>
<dbReference type="GO" id="GO:0006412">
    <property type="term" value="P:translation"/>
    <property type="evidence" value="ECO:0007669"/>
    <property type="project" value="UniProtKB-UniRule"/>
</dbReference>
<dbReference type="CDD" id="cd01658">
    <property type="entry name" value="Ribosomal_L30"/>
    <property type="match status" value="1"/>
</dbReference>
<dbReference type="Gene3D" id="3.30.1390.20">
    <property type="entry name" value="Ribosomal protein L30, ferredoxin-like fold domain"/>
    <property type="match status" value="1"/>
</dbReference>
<dbReference type="HAMAP" id="MF_01371_B">
    <property type="entry name" value="Ribosomal_uL30_B"/>
    <property type="match status" value="1"/>
</dbReference>
<dbReference type="InterPro" id="IPR036919">
    <property type="entry name" value="Ribo_uL30_ferredoxin-like_sf"/>
</dbReference>
<dbReference type="InterPro" id="IPR005996">
    <property type="entry name" value="Ribosomal_uL30_bac-type"/>
</dbReference>
<dbReference type="InterPro" id="IPR016082">
    <property type="entry name" value="Ribosomal_uL30_ferredoxin-like"/>
</dbReference>
<dbReference type="NCBIfam" id="TIGR01308">
    <property type="entry name" value="rpmD_bact"/>
    <property type="match status" value="1"/>
</dbReference>
<dbReference type="PANTHER" id="PTHR15892:SF2">
    <property type="entry name" value="LARGE RIBOSOMAL SUBUNIT PROTEIN UL30M"/>
    <property type="match status" value="1"/>
</dbReference>
<dbReference type="PANTHER" id="PTHR15892">
    <property type="entry name" value="MITOCHONDRIAL RIBOSOMAL PROTEIN L30"/>
    <property type="match status" value="1"/>
</dbReference>
<dbReference type="Pfam" id="PF00327">
    <property type="entry name" value="Ribosomal_L30"/>
    <property type="match status" value="1"/>
</dbReference>
<dbReference type="PIRSF" id="PIRSF002211">
    <property type="entry name" value="Ribosomal_L30_bac-type"/>
    <property type="match status" value="1"/>
</dbReference>
<dbReference type="SUPFAM" id="SSF55129">
    <property type="entry name" value="Ribosomal protein L30p/L7e"/>
    <property type="match status" value="1"/>
</dbReference>
<feature type="chain" id="PRO_1000087248" description="Large ribosomal subunit protein uL30">
    <location>
        <begin position="1"/>
        <end position="62"/>
    </location>
</feature>
<organism>
    <name type="scientific">Dinoroseobacter shibae (strain DSM 16493 / NCIMB 14021 / DFL 12)</name>
    <dbReference type="NCBI Taxonomy" id="398580"/>
    <lineage>
        <taxon>Bacteria</taxon>
        <taxon>Pseudomonadati</taxon>
        <taxon>Pseudomonadota</taxon>
        <taxon>Alphaproteobacteria</taxon>
        <taxon>Rhodobacterales</taxon>
        <taxon>Roseobacteraceae</taxon>
        <taxon>Dinoroseobacter</taxon>
    </lineage>
</organism>
<protein>
    <recommendedName>
        <fullName evidence="1">Large ribosomal subunit protein uL30</fullName>
    </recommendedName>
    <alternativeName>
        <fullName evidence="2">50S ribosomal protein L30</fullName>
    </alternativeName>
</protein>
<reference key="1">
    <citation type="journal article" date="2010" name="ISME J.">
        <title>The complete genome sequence of the algal symbiont Dinoroseobacter shibae: a hitchhiker's guide to life in the sea.</title>
        <authorList>
            <person name="Wagner-Dobler I."/>
            <person name="Ballhausen B."/>
            <person name="Berger M."/>
            <person name="Brinkhoff T."/>
            <person name="Buchholz I."/>
            <person name="Bunk B."/>
            <person name="Cypionka H."/>
            <person name="Daniel R."/>
            <person name="Drepper T."/>
            <person name="Gerdts G."/>
            <person name="Hahnke S."/>
            <person name="Han C."/>
            <person name="Jahn D."/>
            <person name="Kalhoefer D."/>
            <person name="Kiss H."/>
            <person name="Klenk H.P."/>
            <person name="Kyrpides N."/>
            <person name="Liebl W."/>
            <person name="Liesegang H."/>
            <person name="Meincke L."/>
            <person name="Pati A."/>
            <person name="Petersen J."/>
            <person name="Piekarski T."/>
            <person name="Pommerenke C."/>
            <person name="Pradella S."/>
            <person name="Pukall R."/>
            <person name="Rabus R."/>
            <person name="Stackebrandt E."/>
            <person name="Thole S."/>
            <person name="Thompson L."/>
            <person name="Tielen P."/>
            <person name="Tomasch J."/>
            <person name="von Jan M."/>
            <person name="Wanphrut N."/>
            <person name="Wichels A."/>
            <person name="Zech H."/>
            <person name="Simon M."/>
        </authorList>
    </citation>
    <scope>NUCLEOTIDE SEQUENCE [LARGE SCALE GENOMIC DNA]</scope>
    <source>
        <strain>DSM 16493 / NCIMB 14021 / DFL 12</strain>
    </source>
</reference>
<proteinExistence type="inferred from homology"/>
<gene>
    <name evidence="1" type="primary">rpmD</name>
    <name type="ordered locus">Dshi_0303</name>
</gene>
<keyword id="KW-1185">Reference proteome</keyword>
<keyword id="KW-0687">Ribonucleoprotein</keyword>
<keyword id="KW-0689">Ribosomal protein</keyword>
<accession>A8LM75</accession>
<name>RL30_DINSH</name>
<evidence type="ECO:0000255" key="1">
    <source>
        <dbReference type="HAMAP-Rule" id="MF_01371"/>
    </source>
</evidence>
<evidence type="ECO:0000305" key="2"/>